<evidence type="ECO:0000250" key="1"/>
<evidence type="ECO:0000305" key="2"/>
<comment type="function">
    <text>Potential lipid transfer protein.</text>
</comment>
<comment type="tissue specificity">
    <text>Expressed in most tissues except nodules.</text>
</comment>
<comment type="developmental stage">
    <text>Expression correlates with root hair deformation.</text>
</comment>
<comment type="similarity">
    <text evidence="2">Belongs to the plant LTP family.</text>
</comment>
<keyword id="KW-1015">Disulfide bond</keyword>
<keyword id="KW-0446">Lipid-binding</keyword>
<keyword id="KW-0732">Signal</keyword>
<keyword id="KW-0813">Transport</keyword>
<proteinExistence type="evidence at transcript level"/>
<feature type="signal peptide" evidence="1">
    <location>
        <begin position="1"/>
        <end position="33"/>
    </location>
</feature>
<feature type="chain" id="PRO_0000018413" description="Probable non-specific lipid-transfer protein AKCS9">
    <location>
        <begin position="34"/>
        <end position="99"/>
    </location>
</feature>
<feature type="disulfide bond" evidence="1">
    <location>
        <begin position="34"/>
        <end position="68"/>
    </location>
</feature>
<feature type="disulfide bond" evidence="1">
    <location>
        <begin position="42"/>
        <end position="56"/>
    </location>
</feature>
<feature type="disulfide bond" evidence="1">
    <location>
        <begin position="57"/>
        <end position="92"/>
    </location>
</feature>
<feature type="disulfide bond" evidence="1">
    <location>
        <begin position="66"/>
        <end position="99"/>
    </location>
</feature>
<reference key="1">
    <citation type="journal article" date="1994" name="Mol. Plant Microbe Interact.">
        <title>Accumulation of transcripts encoding a lipid transfer-like protein during deformation of nodulation-competent Vigna unguiculata root hairs.</title>
        <authorList>
            <person name="Krause A."/>
            <person name="Sigrist C.J.A."/>
            <person name="Dehning I."/>
            <person name="Sommer H."/>
            <person name="Broughton W.J."/>
        </authorList>
    </citation>
    <scope>NUCLEOTIDE SEQUENCE [MRNA]</scope>
    <source>
        <strain>cv. Red Caloona</strain>
        <tissue>Root hair</tissue>
    </source>
</reference>
<organism>
    <name type="scientific">Vigna unguiculata</name>
    <name type="common">Cowpea</name>
    <dbReference type="NCBI Taxonomy" id="3917"/>
    <lineage>
        <taxon>Eukaryota</taxon>
        <taxon>Viridiplantae</taxon>
        <taxon>Streptophyta</taxon>
        <taxon>Embryophyta</taxon>
        <taxon>Tracheophyta</taxon>
        <taxon>Spermatophyta</taxon>
        <taxon>Magnoliopsida</taxon>
        <taxon>eudicotyledons</taxon>
        <taxon>Gunneridae</taxon>
        <taxon>Pentapetalae</taxon>
        <taxon>rosids</taxon>
        <taxon>fabids</taxon>
        <taxon>Fabales</taxon>
        <taxon>Fabaceae</taxon>
        <taxon>Papilionoideae</taxon>
        <taxon>50 kb inversion clade</taxon>
        <taxon>NPAAA clade</taxon>
        <taxon>indigoferoid/millettioid clade</taxon>
        <taxon>Phaseoleae</taxon>
        <taxon>Vigna</taxon>
    </lineage>
</organism>
<accession>Q43681</accession>
<sequence>MTMKMKMKMSVVCAVVVVALFLIDVGPVAEAVTCNPTELSSCVPAITGGSKPSSTCCSKLKVQEPCLCNYIKNPSLKQYVNSPGAKKVLSNCGVTYPNC</sequence>
<protein>
    <recommendedName>
        <fullName>Probable non-specific lipid-transfer protein AKCS9</fullName>
        <shortName>LTP</shortName>
    </recommendedName>
</protein>
<name>NLTP_VIGUN</name>
<dbReference type="EMBL" id="X79604">
    <property type="protein sequence ID" value="CAA56113.1"/>
    <property type="molecule type" value="mRNA"/>
</dbReference>
<dbReference type="PIR" id="S47084">
    <property type="entry name" value="S47084"/>
</dbReference>
<dbReference type="SMR" id="Q43681"/>
<dbReference type="GO" id="GO:0008289">
    <property type="term" value="F:lipid binding"/>
    <property type="evidence" value="ECO:0007669"/>
    <property type="project" value="UniProtKB-KW"/>
</dbReference>
<dbReference type="GO" id="GO:0006869">
    <property type="term" value="P:lipid transport"/>
    <property type="evidence" value="ECO:0007669"/>
    <property type="project" value="InterPro"/>
</dbReference>
<dbReference type="CDD" id="cd01959">
    <property type="entry name" value="nsLTP2"/>
    <property type="match status" value="1"/>
</dbReference>
<dbReference type="Gene3D" id="1.10.110.10">
    <property type="entry name" value="Plant lipid-transfer and hydrophobic proteins"/>
    <property type="match status" value="1"/>
</dbReference>
<dbReference type="InterPro" id="IPR036312">
    <property type="entry name" value="Bifun_inhib/LTP/seed_sf"/>
</dbReference>
<dbReference type="InterPro" id="IPR016140">
    <property type="entry name" value="Bifunc_inhib/LTP/seed_store"/>
</dbReference>
<dbReference type="InterPro" id="IPR033872">
    <property type="entry name" value="nsLTP2"/>
</dbReference>
<dbReference type="PANTHER" id="PTHR33214">
    <property type="entry name" value="BIFUNCTIONAL INHIBITOR/LIPID-TRANSFER PROTEIN/SEED STORAGE 2S ALBUMIN SUPERFAMILY PROTEIN"/>
    <property type="match status" value="1"/>
</dbReference>
<dbReference type="PANTHER" id="PTHR33214:SF51">
    <property type="entry name" value="BIFUNCTIONAL INHIBITOR_PLANT LIPID TRANSFER PROTEIN_SEED STORAGE HELICAL DOMAIN-CONTAINING PROTEIN"/>
    <property type="match status" value="1"/>
</dbReference>
<dbReference type="Pfam" id="PF00234">
    <property type="entry name" value="Tryp_alpha_amyl"/>
    <property type="match status" value="1"/>
</dbReference>
<dbReference type="SMART" id="SM00499">
    <property type="entry name" value="AAI"/>
    <property type="match status" value="1"/>
</dbReference>
<dbReference type="SUPFAM" id="SSF47699">
    <property type="entry name" value="Bifunctional inhibitor/lipid-transfer protein/seed storage 2S albumin"/>
    <property type="match status" value="1"/>
</dbReference>